<dbReference type="EMBL" id="CP001177">
    <property type="protein sequence ID" value="ACJ80619.1"/>
    <property type="molecule type" value="Genomic_DNA"/>
</dbReference>
<dbReference type="SMR" id="B7HZS6"/>
<dbReference type="KEGG" id="bcr:BCAH187_A1308"/>
<dbReference type="HOGENOM" id="CLU_146641_1_1_9"/>
<dbReference type="Proteomes" id="UP000002214">
    <property type="component" value="Chromosome"/>
</dbReference>
<dbReference type="GO" id="GO:0005886">
    <property type="term" value="C:plasma membrane"/>
    <property type="evidence" value="ECO:0007669"/>
    <property type="project" value="UniProtKB-SubCell"/>
</dbReference>
<dbReference type="HAMAP" id="MF_01536">
    <property type="entry name" value="UPF0344"/>
    <property type="match status" value="1"/>
</dbReference>
<dbReference type="InterPro" id="IPR010899">
    <property type="entry name" value="UPF0344"/>
</dbReference>
<dbReference type="NCBIfam" id="NF010194">
    <property type="entry name" value="PRK13673.1-1"/>
    <property type="match status" value="1"/>
</dbReference>
<dbReference type="Pfam" id="PF07457">
    <property type="entry name" value="DUF1516"/>
    <property type="match status" value="1"/>
</dbReference>
<feature type="chain" id="PRO_1000198638" description="UPF0344 protein BCAH187_A1308">
    <location>
        <begin position="1"/>
        <end position="120"/>
    </location>
</feature>
<feature type="transmembrane region" description="Helical" evidence="1">
    <location>
        <begin position="6"/>
        <end position="26"/>
    </location>
</feature>
<feature type="transmembrane region" description="Helical" evidence="1">
    <location>
        <begin position="32"/>
        <end position="52"/>
    </location>
</feature>
<feature type="transmembrane region" description="Helical" evidence="1">
    <location>
        <begin position="64"/>
        <end position="84"/>
    </location>
</feature>
<feature type="transmembrane region" description="Helical" evidence="1">
    <location>
        <begin position="91"/>
        <end position="111"/>
    </location>
</feature>
<gene>
    <name type="ordered locus">BCAH187_A1308</name>
</gene>
<accession>B7HZS6</accession>
<evidence type="ECO:0000255" key="1">
    <source>
        <dbReference type="HAMAP-Rule" id="MF_01536"/>
    </source>
</evidence>
<sequence length="120" mass="13545">MVHMHITAWALGLILFFVAYSLYSAGRKGKGVHMGLRLMYIIIIVTGVWLYLDQTIVDKSYHMWYGLKMLAGILVIAGMEMVLVKMSKNKATGAFWGLFIIALVAVFYLGLKLPIGWQVF</sequence>
<comment type="subcellular location">
    <subcellularLocation>
        <location evidence="1">Cell membrane</location>
        <topology evidence="1">Multi-pass membrane protein</topology>
    </subcellularLocation>
</comment>
<comment type="similarity">
    <text evidence="1">Belongs to the UPF0344 family.</text>
</comment>
<reference key="1">
    <citation type="submission" date="2008-10" db="EMBL/GenBank/DDBJ databases">
        <title>Genome sequence of Bacillus cereus AH187.</title>
        <authorList>
            <person name="Dodson R.J."/>
            <person name="Durkin A.S."/>
            <person name="Rosovitz M.J."/>
            <person name="Rasko D.A."/>
            <person name="Kolsto A.B."/>
            <person name="Okstad O.A."/>
            <person name="Ravel J."/>
            <person name="Sutton G."/>
        </authorList>
    </citation>
    <scope>NUCLEOTIDE SEQUENCE [LARGE SCALE GENOMIC DNA]</scope>
    <source>
        <strain>AH187</strain>
    </source>
</reference>
<protein>
    <recommendedName>
        <fullName evidence="1">UPF0344 protein BCAH187_A1308</fullName>
    </recommendedName>
</protein>
<keyword id="KW-1003">Cell membrane</keyword>
<keyword id="KW-0472">Membrane</keyword>
<keyword id="KW-0812">Transmembrane</keyword>
<keyword id="KW-1133">Transmembrane helix</keyword>
<proteinExistence type="inferred from homology"/>
<name>Y1308_BACC7</name>
<organism>
    <name type="scientific">Bacillus cereus (strain AH187)</name>
    <dbReference type="NCBI Taxonomy" id="405534"/>
    <lineage>
        <taxon>Bacteria</taxon>
        <taxon>Bacillati</taxon>
        <taxon>Bacillota</taxon>
        <taxon>Bacilli</taxon>
        <taxon>Bacillales</taxon>
        <taxon>Bacillaceae</taxon>
        <taxon>Bacillus</taxon>
        <taxon>Bacillus cereus group</taxon>
    </lineage>
</organism>